<sequence>MPFGNTHNKHKLNFKAEEEYPDLSKHNNHMAKALTLEIYKKLRDKETPSGFTLDDVIQTGVDNPGHPFIMTVGCVAGDEESYTVFKDLFDPIIQDRHGGFKPTDKHKTDLNHENLKGGDDLDPNYVLSSRVRTGRSIKGYALPPHCSRGERRAVEKLSVEALNSLTGEFKGKYYPLKSMTEQEQQQLIDDHFLFDKPVSPLLLASGMARDWPDARGIWHNDNKSFLVWVNEEDHLRVISMEKGGNMKEVFRRFCVGLQKIEEIFKKAGHPFMWNEHLGYVLTCPSNLGTGLRGGVHVKLAHLSKHPKFEEILTRLRLQKRGTGGVDTAAVGSVFDVSNADRLGSSEVEQVQLVVDGVKLMVEMEKKLEKGQSIDDMIPAQK</sequence>
<gene>
    <name type="primary">CKM</name>
</gene>
<protein>
    <recommendedName>
        <fullName>Creatine kinase M-type</fullName>
        <ecNumber evidence="2">2.7.3.2</ecNumber>
    </recommendedName>
    <alternativeName>
        <fullName>Creatine kinase M chain</fullName>
    </alternativeName>
    <alternativeName>
        <fullName>Creatine phosphokinase M-type</fullName>
        <shortName>CPK-M</shortName>
    </alternativeName>
    <alternativeName>
        <fullName>M-CK</fullName>
    </alternativeName>
</protein>
<feature type="chain" id="PRO_0000211973" description="Creatine kinase M-type">
    <location>
        <begin position="1"/>
        <end position="381"/>
    </location>
</feature>
<feature type="domain" description="Phosphagen kinase N-terminal" evidence="6">
    <location>
        <begin position="11"/>
        <end position="98"/>
    </location>
</feature>
<feature type="domain" description="Phosphagen kinase C-terminal" evidence="7">
    <location>
        <begin position="125"/>
        <end position="367"/>
    </location>
</feature>
<feature type="binding site" evidence="7">
    <location>
        <begin position="128"/>
        <end position="132"/>
    </location>
    <ligand>
        <name>ATP</name>
        <dbReference type="ChEBI" id="CHEBI:30616"/>
    </ligand>
</feature>
<feature type="binding site" evidence="7">
    <location>
        <position position="191"/>
    </location>
    <ligand>
        <name>ATP</name>
        <dbReference type="ChEBI" id="CHEBI:30616"/>
    </ligand>
</feature>
<feature type="binding site" evidence="7">
    <location>
        <position position="236"/>
    </location>
    <ligand>
        <name>ATP</name>
        <dbReference type="ChEBI" id="CHEBI:30616"/>
    </ligand>
</feature>
<feature type="binding site" evidence="7">
    <location>
        <position position="292"/>
    </location>
    <ligand>
        <name>ATP</name>
        <dbReference type="ChEBI" id="CHEBI:30616"/>
    </ligand>
</feature>
<feature type="binding site" evidence="7">
    <location>
        <begin position="320"/>
        <end position="325"/>
    </location>
    <ligand>
        <name>ATP</name>
        <dbReference type="ChEBI" id="CHEBI:30616"/>
    </ligand>
</feature>
<feature type="binding site" evidence="7">
    <location>
        <position position="335"/>
    </location>
    <ligand>
        <name>ATP</name>
        <dbReference type="ChEBI" id="CHEBI:30616"/>
    </ligand>
</feature>
<feature type="modified residue" description="Phosphoserine" evidence="4">
    <location>
        <position position="164"/>
    </location>
</feature>
<feature type="modified residue" description="Phosphothreonine" evidence="3">
    <location>
        <position position="166"/>
    </location>
</feature>
<feature type="modified residue" description="Phosphoserine" evidence="3">
    <location>
        <position position="178"/>
    </location>
</feature>
<feature type="modified residue" description="Phosphothreonine" evidence="3">
    <location>
        <position position="180"/>
    </location>
</feature>
<feature type="modified residue" description="Phosphoserine" evidence="4">
    <location>
        <position position="199"/>
    </location>
</feature>
<feature type="modified residue" description="Phosphothreonine" evidence="3">
    <location>
        <position position="313"/>
    </location>
</feature>
<feature type="modified residue" description="Phosphothreonine" evidence="4">
    <location>
        <position position="322"/>
    </location>
</feature>
<feature type="modified residue" description="Phosphoserine" evidence="4">
    <location>
        <position position="372"/>
    </location>
</feature>
<feature type="sequence variant" evidence="9">
    <original>I</original>
    <variation>M</variation>
    <location>
        <position position="377"/>
    </location>
</feature>
<feature type="sequence conflict" description="In Ref. 1; AAD30974." evidence="10" ref="1">
    <original>M</original>
    <variation>L</variation>
    <location>
        <position position="376"/>
    </location>
</feature>
<feature type="helix" evidence="11">
    <location>
        <begin position="6"/>
        <end position="11"/>
    </location>
</feature>
<feature type="helix" evidence="11">
    <location>
        <begin position="16"/>
        <end position="19"/>
    </location>
</feature>
<feature type="helix" evidence="11">
    <location>
        <begin position="29"/>
        <end position="33"/>
    </location>
</feature>
<feature type="helix" evidence="11">
    <location>
        <begin position="36"/>
        <end position="42"/>
    </location>
</feature>
<feature type="helix" evidence="11">
    <location>
        <begin position="53"/>
        <end position="62"/>
    </location>
</feature>
<feature type="helix" evidence="11">
    <location>
        <begin position="81"/>
        <end position="84"/>
    </location>
</feature>
<feature type="helix" evidence="11">
    <location>
        <begin position="86"/>
        <end position="96"/>
    </location>
</feature>
<feature type="turn" evidence="11">
    <location>
        <begin position="97"/>
        <end position="99"/>
    </location>
</feature>
<feature type="helix" evidence="11">
    <location>
        <begin position="112"/>
        <end position="114"/>
    </location>
</feature>
<feature type="turn" evidence="11">
    <location>
        <begin position="123"/>
        <end position="125"/>
    </location>
</feature>
<feature type="strand" evidence="11">
    <location>
        <begin position="126"/>
        <end position="135"/>
    </location>
</feature>
<feature type="turn" evidence="11">
    <location>
        <begin position="143"/>
        <end position="145"/>
    </location>
</feature>
<feature type="helix" evidence="11">
    <location>
        <begin position="148"/>
        <end position="162"/>
    </location>
</feature>
<feature type="helix" evidence="11">
    <location>
        <begin position="167"/>
        <end position="169"/>
    </location>
</feature>
<feature type="strand" evidence="11">
    <location>
        <begin position="171"/>
        <end position="175"/>
    </location>
</feature>
<feature type="helix" evidence="11">
    <location>
        <begin position="176"/>
        <end position="178"/>
    </location>
</feature>
<feature type="helix" evidence="11">
    <location>
        <begin position="181"/>
        <end position="190"/>
    </location>
</feature>
<feature type="helix" evidence="11">
    <location>
        <begin position="200"/>
        <end position="203"/>
    </location>
</feature>
<feature type="turn" evidence="11">
    <location>
        <begin position="204"/>
        <end position="214"/>
    </location>
</feature>
<feature type="strand" evidence="11">
    <location>
        <begin position="216"/>
        <end position="220"/>
    </location>
</feature>
<feature type="strand" evidence="11">
    <location>
        <begin position="225"/>
        <end position="244"/>
    </location>
</feature>
<feature type="helix" evidence="11">
    <location>
        <begin position="246"/>
        <end position="266"/>
    </location>
</feature>
<feature type="turn" evidence="11">
    <location>
        <begin position="275"/>
        <end position="277"/>
    </location>
</feature>
<feature type="helix" evidence="11">
    <location>
        <begin position="284"/>
        <end position="286"/>
    </location>
</feature>
<feature type="strand" evidence="11">
    <location>
        <begin position="292"/>
        <end position="298"/>
    </location>
</feature>
<feature type="turn" evidence="11">
    <location>
        <begin position="300"/>
        <end position="303"/>
    </location>
</feature>
<feature type="helix" evidence="11">
    <location>
        <begin position="308"/>
        <end position="315"/>
    </location>
</feature>
<feature type="strand" evidence="11">
    <location>
        <begin position="317"/>
        <end position="320"/>
    </location>
</feature>
<feature type="strand" evidence="11">
    <location>
        <begin position="332"/>
        <end position="338"/>
    </location>
</feature>
<feature type="strand" evidence="11">
    <location>
        <begin position="342"/>
        <end position="344"/>
    </location>
</feature>
<feature type="helix" evidence="11">
    <location>
        <begin position="346"/>
        <end position="369"/>
    </location>
</feature>
<name>KCRM_BOVIN</name>
<evidence type="ECO:0000250" key="1"/>
<evidence type="ECO:0000250" key="2">
    <source>
        <dbReference type="UniProtKB" id="P00563"/>
    </source>
</evidence>
<evidence type="ECO:0000250" key="3">
    <source>
        <dbReference type="UniProtKB" id="P00564"/>
    </source>
</evidence>
<evidence type="ECO:0000250" key="4">
    <source>
        <dbReference type="UniProtKB" id="P07310"/>
    </source>
</evidence>
<evidence type="ECO:0000250" key="5">
    <source>
        <dbReference type="UniProtKB" id="P12277"/>
    </source>
</evidence>
<evidence type="ECO:0000255" key="6">
    <source>
        <dbReference type="PROSITE-ProRule" id="PRU00842"/>
    </source>
</evidence>
<evidence type="ECO:0000255" key="7">
    <source>
        <dbReference type="PROSITE-ProRule" id="PRU00843"/>
    </source>
</evidence>
<evidence type="ECO:0000255" key="8">
    <source>
        <dbReference type="PROSITE-ProRule" id="PRU10029"/>
    </source>
</evidence>
<evidence type="ECO:0000269" key="9">
    <source ref="1"/>
</evidence>
<evidence type="ECO:0000305" key="10"/>
<evidence type="ECO:0007829" key="11">
    <source>
        <dbReference type="PDB" id="1G0W"/>
    </source>
</evidence>
<comment type="function">
    <text evidence="2">Reversibly catalyzes the transfer of phosphate between ATP and various phosphogens (e.g. creatine phosphate). Creatine kinase isoenzymes play a central role in energy transduction in tissues with large, fluctuating energy demands, such as skeletal muscle, heart, brain and spermatozoa.</text>
</comment>
<comment type="catalytic activity">
    <reaction evidence="2 8">
        <text>creatine + ATP = N-phosphocreatine + ADP + H(+)</text>
        <dbReference type="Rhea" id="RHEA:17157"/>
        <dbReference type="ChEBI" id="CHEBI:15378"/>
        <dbReference type="ChEBI" id="CHEBI:30616"/>
        <dbReference type="ChEBI" id="CHEBI:57947"/>
        <dbReference type="ChEBI" id="CHEBI:58092"/>
        <dbReference type="ChEBI" id="CHEBI:456216"/>
        <dbReference type="EC" id="2.7.3.2"/>
    </reaction>
</comment>
<comment type="subunit">
    <text evidence="5">Dimer of identical or non-identical chains, which can be either B (brain type) or M (muscle type). With MM being the major form in skeletal muscle and myocardium, MB existing in myocardium, and BB existing in many tissues, especially brain.</text>
</comment>
<comment type="subcellular location">
    <subcellularLocation>
        <location evidence="1">Cytoplasm</location>
    </subcellularLocation>
</comment>
<comment type="similarity">
    <text evidence="6 7">Belongs to the ATP:guanido phosphotransferase family.</text>
</comment>
<keyword id="KW-0002">3D-structure</keyword>
<keyword id="KW-0067">ATP-binding</keyword>
<keyword id="KW-0963">Cytoplasm</keyword>
<keyword id="KW-0418">Kinase</keyword>
<keyword id="KW-0547">Nucleotide-binding</keyword>
<keyword id="KW-0597">Phosphoprotein</keyword>
<keyword id="KW-1185">Reference proteome</keyword>
<keyword id="KW-0808">Transferase</keyword>
<proteinExistence type="evidence at protein level"/>
<organism>
    <name type="scientific">Bos taurus</name>
    <name type="common">Bovine</name>
    <dbReference type="NCBI Taxonomy" id="9913"/>
    <lineage>
        <taxon>Eukaryota</taxon>
        <taxon>Metazoa</taxon>
        <taxon>Chordata</taxon>
        <taxon>Craniata</taxon>
        <taxon>Vertebrata</taxon>
        <taxon>Euteleostomi</taxon>
        <taxon>Mammalia</taxon>
        <taxon>Eutheria</taxon>
        <taxon>Laurasiatheria</taxon>
        <taxon>Artiodactyla</taxon>
        <taxon>Ruminantia</taxon>
        <taxon>Pecora</taxon>
        <taxon>Bovidae</taxon>
        <taxon>Bovinae</taxon>
        <taxon>Bos</taxon>
    </lineage>
</organism>
<accession>Q9XSC6</accession>
<accession>Q5E9Y4</accession>
<dbReference type="EC" id="2.7.3.2" evidence="2"/>
<dbReference type="EMBL" id="AF120106">
    <property type="protein sequence ID" value="AAD30974.1"/>
    <property type="molecule type" value="mRNA"/>
</dbReference>
<dbReference type="EMBL" id="BT020785">
    <property type="protein sequence ID" value="AAX08802.1"/>
    <property type="molecule type" value="mRNA"/>
</dbReference>
<dbReference type="EMBL" id="BT021173">
    <property type="protein sequence ID" value="AAX31355.1"/>
    <property type="molecule type" value="mRNA"/>
</dbReference>
<dbReference type="EMBL" id="BC102907">
    <property type="protein sequence ID" value="AAI02908.1"/>
    <property type="molecule type" value="mRNA"/>
</dbReference>
<dbReference type="RefSeq" id="NP_777198.2">
    <property type="nucleotide sequence ID" value="NM_174773.4"/>
</dbReference>
<dbReference type="PDB" id="1G0W">
    <property type="method" value="X-ray"/>
    <property type="resolution" value="2.30 A"/>
    <property type="chains" value="A=7-359"/>
</dbReference>
<dbReference type="PDBsum" id="1G0W"/>
<dbReference type="SMR" id="Q9XSC6"/>
<dbReference type="FunCoup" id="Q9XSC6">
    <property type="interactions" value="178"/>
</dbReference>
<dbReference type="Allergome" id="11907">
    <property type="allergen name" value="Bos d CK"/>
</dbReference>
<dbReference type="PaxDb" id="9913-ENSBTAP00000018492"/>
<dbReference type="PeptideAtlas" id="Q9XSC6"/>
<dbReference type="Ensembl" id="ENSBTAT00000018492.4">
    <property type="protein sequence ID" value="ENSBTAP00000018492.2"/>
    <property type="gene ID" value="ENSBTAG00000013921.4"/>
</dbReference>
<dbReference type="GeneID" id="286822"/>
<dbReference type="KEGG" id="bta:286822"/>
<dbReference type="CTD" id="1158"/>
<dbReference type="VEuPathDB" id="HostDB:ENSBTAG00000013921"/>
<dbReference type="VGNC" id="VGNC:27385">
    <property type="gene designation" value="CKM"/>
</dbReference>
<dbReference type="eggNOG" id="KOG3581">
    <property type="taxonomic scope" value="Eukaryota"/>
</dbReference>
<dbReference type="GeneTree" id="ENSGT00950000182772"/>
<dbReference type="HOGENOM" id="CLU_019868_4_2_1"/>
<dbReference type="InParanoid" id="Q9XSC6"/>
<dbReference type="OMA" id="WGYLTSC"/>
<dbReference type="OrthoDB" id="430219at2759"/>
<dbReference type="TreeFam" id="TF314214"/>
<dbReference type="Reactome" id="R-BTA-71288">
    <property type="pathway name" value="Creatine metabolism"/>
</dbReference>
<dbReference type="EvolutionaryTrace" id="Q9XSC6"/>
<dbReference type="Proteomes" id="UP000009136">
    <property type="component" value="Chromosome 18"/>
</dbReference>
<dbReference type="Bgee" id="ENSBTAG00000013921">
    <property type="expression patterns" value="Expressed in laryngeal cartilage and 82 other cell types or tissues"/>
</dbReference>
<dbReference type="GO" id="GO:0005737">
    <property type="term" value="C:cytoplasm"/>
    <property type="evidence" value="ECO:0007669"/>
    <property type="project" value="UniProtKB-SubCell"/>
</dbReference>
<dbReference type="GO" id="GO:0005615">
    <property type="term" value="C:extracellular space"/>
    <property type="evidence" value="ECO:0000250"/>
    <property type="project" value="AgBase"/>
</dbReference>
<dbReference type="GO" id="GO:0005524">
    <property type="term" value="F:ATP binding"/>
    <property type="evidence" value="ECO:0007669"/>
    <property type="project" value="UniProtKB-KW"/>
</dbReference>
<dbReference type="GO" id="GO:0004111">
    <property type="term" value="F:creatine kinase activity"/>
    <property type="evidence" value="ECO:0000250"/>
    <property type="project" value="AgBase"/>
</dbReference>
<dbReference type="GO" id="GO:0046314">
    <property type="term" value="P:phosphocreatine biosynthetic process"/>
    <property type="evidence" value="ECO:0000250"/>
    <property type="project" value="AgBase"/>
</dbReference>
<dbReference type="GO" id="GO:0009408">
    <property type="term" value="P:response to heat"/>
    <property type="evidence" value="ECO:0000250"/>
    <property type="project" value="AgBase"/>
</dbReference>
<dbReference type="CDD" id="cd00716">
    <property type="entry name" value="creatine_kinase_like"/>
    <property type="match status" value="1"/>
</dbReference>
<dbReference type="FunFam" id="3.30.590.10:FF:000026">
    <property type="entry name" value="Creatine kinase B-type"/>
    <property type="match status" value="1"/>
</dbReference>
<dbReference type="FunFam" id="1.10.135.10:FF:000001">
    <property type="entry name" value="Creatine kinase M-type"/>
    <property type="match status" value="1"/>
</dbReference>
<dbReference type="Gene3D" id="1.10.135.10">
    <property type="entry name" value="ATP:guanido phosphotransferase, N-terminal domain"/>
    <property type="match status" value="1"/>
</dbReference>
<dbReference type="Gene3D" id="3.30.590.10">
    <property type="entry name" value="Glutamine synthetase/guanido kinase, catalytic domain"/>
    <property type="match status" value="1"/>
</dbReference>
<dbReference type="InterPro" id="IPR000749">
    <property type="entry name" value="ATP-guanido_PTrfase"/>
</dbReference>
<dbReference type="InterPro" id="IPR022415">
    <property type="entry name" value="ATP-guanido_PTrfase_AS"/>
</dbReference>
<dbReference type="InterPro" id="IPR022414">
    <property type="entry name" value="ATP-guanido_PTrfase_cat"/>
</dbReference>
<dbReference type="InterPro" id="IPR022413">
    <property type="entry name" value="ATP-guanido_PTrfase_N"/>
</dbReference>
<dbReference type="InterPro" id="IPR036802">
    <property type="entry name" value="ATP-guanido_PTrfase_N_sf"/>
</dbReference>
<dbReference type="InterPro" id="IPR014746">
    <property type="entry name" value="Gln_synth/guanido_kin_cat_dom"/>
</dbReference>
<dbReference type="PANTHER" id="PTHR11547">
    <property type="entry name" value="ARGININE OR CREATINE KINASE"/>
    <property type="match status" value="1"/>
</dbReference>
<dbReference type="PANTHER" id="PTHR11547:SF63">
    <property type="entry name" value="CREATINE KINASE M-TYPE"/>
    <property type="match status" value="1"/>
</dbReference>
<dbReference type="Pfam" id="PF00217">
    <property type="entry name" value="ATP-gua_Ptrans"/>
    <property type="match status" value="1"/>
</dbReference>
<dbReference type="Pfam" id="PF02807">
    <property type="entry name" value="ATP-gua_PtransN"/>
    <property type="match status" value="1"/>
</dbReference>
<dbReference type="SUPFAM" id="SSF55931">
    <property type="entry name" value="Glutamine synthetase/guanido kinase"/>
    <property type="match status" value="1"/>
</dbReference>
<dbReference type="SUPFAM" id="SSF48034">
    <property type="entry name" value="Guanido kinase N-terminal domain"/>
    <property type="match status" value="1"/>
</dbReference>
<dbReference type="PROSITE" id="PS00112">
    <property type="entry name" value="PHOSPHAGEN_KINASE"/>
    <property type="match status" value="1"/>
</dbReference>
<dbReference type="PROSITE" id="PS51510">
    <property type="entry name" value="PHOSPHAGEN_KINASE_C"/>
    <property type="match status" value="1"/>
</dbReference>
<dbReference type="PROSITE" id="PS51509">
    <property type="entry name" value="PHOSPHAGEN_KINASE_N"/>
    <property type="match status" value="1"/>
</dbReference>
<reference key="1">
    <citation type="submission" date="1999-01" db="EMBL/GenBank/DDBJ databases">
        <title>Bovine creatine kinase M.</title>
        <authorList>
            <person name="Towler E.M."/>
        </authorList>
    </citation>
    <scope>NUCLEOTIDE SEQUENCE [MRNA]</scope>
    <scope>VARIANT MET-377</scope>
    <source>
        <tissue>Heart</tissue>
    </source>
</reference>
<reference key="2">
    <citation type="journal article" date="2005" name="BMC Genomics">
        <title>Characterization of 954 bovine full-CDS cDNA sequences.</title>
        <authorList>
            <person name="Harhay G.P."/>
            <person name="Sonstegard T.S."/>
            <person name="Keele J.W."/>
            <person name="Heaton M.P."/>
            <person name="Clawson M.L."/>
            <person name="Snelling W.M."/>
            <person name="Wiedmann R.T."/>
            <person name="Van Tassell C.P."/>
            <person name="Smith T.P.L."/>
        </authorList>
    </citation>
    <scope>NUCLEOTIDE SEQUENCE [LARGE SCALE MRNA]</scope>
</reference>
<reference key="3">
    <citation type="submission" date="2005-08" db="EMBL/GenBank/DDBJ databases">
        <authorList>
            <consortium name="NIH - Mammalian Gene Collection (MGC) project"/>
        </authorList>
    </citation>
    <scope>NUCLEOTIDE SEQUENCE [LARGE SCALE MRNA]</scope>
    <source>
        <strain>Hereford</strain>
        <tissue>Heart ventricle</tissue>
    </source>
</reference>
<reference key="4">
    <citation type="journal article" date="2001" name="Acta Crystallogr. D">
        <title>The three-dimensional structure of cytosolic bovine retinal creatine kinase.</title>
        <authorList>
            <person name="Tisi D."/>
            <person name="Bax B."/>
            <person name="Loew A."/>
        </authorList>
    </citation>
    <scope>X-RAY CRYSTALLOGRAPHY (2.3 ANGSTROMS) OF 11-359</scope>
    <scope>SUBUNIT</scope>
</reference>